<protein>
    <recommendedName>
        <fullName evidence="1">L-fuculose phosphate aldolase</fullName>
        <ecNumber evidence="1">4.1.2.17</ecNumber>
    </recommendedName>
    <alternativeName>
        <fullName evidence="1">L-fuculose-1-phosphate aldolase</fullName>
    </alternativeName>
</protein>
<feature type="chain" id="PRO_0000162928" description="L-fuculose phosphate aldolase">
    <location>
        <begin position="1"/>
        <end position="216"/>
    </location>
</feature>
<feature type="active site" description="Proton donor/acceptor" evidence="1">
    <location>
        <position position="73"/>
    </location>
</feature>
<feature type="binding site" evidence="1">
    <location>
        <begin position="28"/>
        <end position="29"/>
    </location>
    <ligand>
        <name>substrate</name>
    </ligand>
</feature>
<feature type="binding site" evidence="1">
    <location>
        <begin position="43"/>
        <end position="44"/>
    </location>
    <ligand>
        <name>substrate</name>
    </ligand>
</feature>
<feature type="binding site" evidence="1">
    <location>
        <begin position="71"/>
        <end position="72"/>
    </location>
    <ligand>
        <name>substrate</name>
    </ligand>
</feature>
<feature type="binding site" evidence="1">
    <location>
        <position position="73"/>
    </location>
    <ligand>
        <name>Zn(2+)</name>
        <dbReference type="ChEBI" id="CHEBI:29105"/>
        <note>catalytic</note>
    </ligand>
</feature>
<feature type="binding site" evidence="1">
    <location>
        <position position="92"/>
    </location>
    <ligand>
        <name>Zn(2+)</name>
        <dbReference type="ChEBI" id="CHEBI:29105"/>
        <note>catalytic</note>
    </ligand>
</feature>
<feature type="binding site" evidence="1">
    <location>
        <position position="94"/>
    </location>
    <ligand>
        <name>Zn(2+)</name>
        <dbReference type="ChEBI" id="CHEBI:29105"/>
        <note>catalytic</note>
    </ligand>
</feature>
<feature type="binding site" evidence="1">
    <location>
        <position position="155"/>
    </location>
    <ligand>
        <name>Zn(2+)</name>
        <dbReference type="ChEBI" id="CHEBI:29105"/>
        <note>catalytic</note>
    </ligand>
</feature>
<feature type="site" description="Plays a key role in the stabilization of the transition state and positioning the aldehyde component" evidence="1">
    <location>
        <position position="113"/>
    </location>
</feature>
<feature type="site" description="Plays a key role in the stabilization of the transition state and positioning the aldehyde component" evidence="1">
    <location>
        <position position="131"/>
    </location>
</feature>
<feature type="site" description="Plays a key role in the stabilization of the transition state and positioning the aldehyde component" evidence="1">
    <location>
        <position position="209"/>
    </location>
</feature>
<name>FUCA_HAEIN</name>
<gene>
    <name evidence="1" type="primary">fucA</name>
    <name type="ordered locus">HI_0611</name>
</gene>
<dbReference type="EC" id="4.1.2.17" evidence="1"/>
<dbReference type="EMBL" id="L42023">
    <property type="protein sequence ID" value="AAC22270.1"/>
    <property type="molecule type" value="Genomic_DNA"/>
</dbReference>
<dbReference type="PIR" id="C64081">
    <property type="entry name" value="C64081"/>
</dbReference>
<dbReference type="RefSeq" id="NP_438769.1">
    <property type="nucleotide sequence ID" value="NC_000907.1"/>
</dbReference>
<dbReference type="SMR" id="P44777"/>
<dbReference type="STRING" id="71421.HI_0611"/>
<dbReference type="EnsemblBacteria" id="AAC22270">
    <property type="protein sequence ID" value="AAC22270"/>
    <property type="gene ID" value="HI_0611"/>
</dbReference>
<dbReference type="KEGG" id="hin:HI_0611"/>
<dbReference type="PATRIC" id="fig|71421.8.peg.635"/>
<dbReference type="eggNOG" id="COG0235">
    <property type="taxonomic scope" value="Bacteria"/>
</dbReference>
<dbReference type="HOGENOM" id="CLU_006033_3_0_6"/>
<dbReference type="OrthoDB" id="5500703at2"/>
<dbReference type="PhylomeDB" id="P44777"/>
<dbReference type="BioCyc" id="HINF71421:G1GJ1-632-MONOMER"/>
<dbReference type="UniPathway" id="UPA00563">
    <property type="reaction ID" value="UER00626"/>
</dbReference>
<dbReference type="Proteomes" id="UP000000579">
    <property type="component" value="Chromosome"/>
</dbReference>
<dbReference type="GO" id="GO:0005829">
    <property type="term" value="C:cytosol"/>
    <property type="evidence" value="ECO:0000318"/>
    <property type="project" value="GO_Central"/>
</dbReference>
<dbReference type="GO" id="GO:0016832">
    <property type="term" value="F:aldehyde-lyase activity"/>
    <property type="evidence" value="ECO:0000318"/>
    <property type="project" value="GO_Central"/>
</dbReference>
<dbReference type="GO" id="GO:0008738">
    <property type="term" value="F:L-fuculose-phosphate aldolase activity"/>
    <property type="evidence" value="ECO:0007669"/>
    <property type="project" value="UniProtKB-UniRule"/>
</dbReference>
<dbReference type="GO" id="GO:0008270">
    <property type="term" value="F:zinc ion binding"/>
    <property type="evidence" value="ECO:0007669"/>
    <property type="project" value="UniProtKB-UniRule"/>
</dbReference>
<dbReference type="GO" id="GO:0019568">
    <property type="term" value="P:arabinose catabolic process"/>
    <property type="evidence" value="ECO:0007669"/>
    <property type="project" value="UniProtKB-KW"/>
</dbReference>
<dbReference type="GO" id="GO:0042355">
    <property type="term" value="P:L-fucose catabolic process"/>
    <property type="evidence" value="ECO:0007669"/>
    <property type="project" value="UniProtKB-UniRule"/>
</dbReference>
<dbReference type="GO" id="GO:0019323">
    <property type="term" value="P:pentose catabolic process"/>
    <property type="evidence" value="ECO:0000318"/>
    <property type="project" value="GO_Central"/>
</dbReference>
<dbReference type="CDD" id="cd00398">
    <property type="entry name" value="Aldolase_II"/>
    <property type="match status" value="1"/>
</dbReference>
<dbReference type="FunFam" id="3.40.225.10:FF:000005">
    <property type="entry name" value="L-fuculose phosphate aldolase"/>
    <property type="match status" value="1"/>
</dbReference>
<dbReference type="Gene3D" id="3.40.225.10">
    <property type="entry name" value="Class II aldolase/adducin N-terminal domain"/>
    <property type="match status" value="1"/>
</dbReference>
<dbReference type="HAMAP" id="MF_00987">
    <property type="entry name" value="FucA"/>
    <property type="match status" value="1"/>
</dbReference>
<dbReference type="InterPro" id="IPR050197">
    <property type="entry name" value="Aldolase_class_II_sugar_metab"/>
</dbReference>
<dbReference type="InterPro" id="IPR001303">
    <property type="entry name" value="Aldolase_II/adducin_N"/>
</dbReference>
<dbReference type="InterPro" id="IPR036409">
    <property type="entry name" value="Aldolase_II/adducin_N_sf"/>
</dbReference>
<dbReference type="InterPro" id="IPR004782">
    <property type="entry name" value="FucA"/>
</dbReference>
<dbReference type="NCBIfam" id="TIGR01086">
    <property type="entry name" value="fucA"/>
    <property type="match status" value="1"/>
</dbReference>
<dbReference type="NCBIfam" id="NF005984">
    <property type="entry name" value="PRK08087.1"/>
    <property type="match status" value="1"/>
</dbReference>
<dbReference type="PANTHER" id="PTHR22789:SF0">
    <property type="entry name" value="3-OXO-TETRONATE 4-PHOSPHATE DECARBOXYLASE-RELATED"/>
    <property type="match status" value="1"/>
</dbReference>
<dbReference type="PANTHER" id="PTHR22789">
    <property type="entry name" value="FUCULOSE PHOSPHATE ALDOLASE"/>
    <property type="match status" value="1"/>
</dbReference>
<dbReference type="Pfam" id="PF00596">
    <property type="entry name" value="Aldolase_II"/>
    <property type="match status" value="1"/>
</dbReference>
<dbReference type="SMART" id="SM01007">
    <property type="entry name" value="Aldolase_II"/>
    <property type="match status" value="1"/>
</dbReference>
<dbReference type="SUPFAM" id="SSF53639">
    <property type="entry name" value="AraD/HMP-PK domain-like"/>
    <property type="match status" value="1"/>
</dbReference>
<reference key="1">
    <citation type="journal article" date="1995" name="Science">
        <title>Whole-genome random sequencing and assembly of Haemophilus influenzae Rd.</title>
        <authorList>
            <person name="Fleischmann R.D."/>
            <person name="Adams M.D."/>
            <person name="White O."/>
            <person name="Clayton R.A."/>
            <person name="Kirkness E.F."/>
            <person name="Kerlavage A.R."/>
            <person name="Bult C.J."/>
            <person name="Tomb J.-F."/>
            <person name="Dougherty B.A."/>
            <person name="Merrick J.M."/>
            <person name="McKenney K."/>
            <person name="Sutton G.G."/>
            <person name="FitzHugh W."/>
            <person name="Fields C.A."/>
            <person name="Gocayne J.D."/>
            <person name="Scott J.D."/>
            <person name="Shirley R."/>
            <person name="Liu L.-I."/>
            <person name="Glodek A."/>
            <person name="Kelley J.M."/>
            <person name="Weidman J.F."/>
            <person name="Phillips C.A."/>
            <person name="Spriggs T."/>
            <person name="Hedblom E."/>
            <person name="Cotton M.D."/>
            <person name="Utterback T.R."/>
            <person name="Hanna M.C."/>
            <person name="Nguyen D.T."/>
            <person name="Saudek D.M."/>
            <person name="Brandon R.C."/>
            <person name="Fine L.D."/>
            <person name="Fritchman J.L."/>
            <person name="Fuhrmann J.L."/>
            <person name="Geoghagen N.S.M."/>
            <person name="Gnehm C.L."/>
            <person name="McDonald L.A."/>
            <person name="Small K.V."/>
            <person name="Fraser C.M."/>
            <person name="Smith H.O."/>
            <person name="Venter J.C."/>
        </authorList>
    </citation>
    <scope>NUCLEOTIDE SEQUENCE [LARGE SCALE GENOMIC DNA]</scope>
    <source>
        <strain>ATCC 51907 / DSM 11121 / KW20 / Rd</strain>
    </source>
</reference>
<proteinExistence type="inferred from homology"/>
<accession>P44777</accession>
<keyword id="KW-0054">Arabinose catabolism</keyword>
<keyword id="KW-0119">Carbohydrate metabolism</keyword>
<keyword id="KW-0294">Fucose metabolism</keyword>
<keyword id="KW-0456">Lyase</keyword>
<keyword id="KW-0479">Metal-binding</keyword>
<keyword id="KW-1185">Reference proteome</keyword>
<keyword id="KW-0862">Zinc</keyword>
<sequence>MNRAELSQKIIDTCLEMTKLGLNQGTAGNVSVRYKDGMLITPTGMPYHLMKTENIVYVDGNGKHEENKLPSSEWQFHLSVYHTRPEANAVVHNHSIHCAGLSILEKPIPAIHYMVAVSGTDHIPCVPYATFGSHKLASYVATGIKESKAILLAHHGLITCGENLDKALWLAQEVEVLASWYLKLLSTGLEIPLLSKEQMQVVLGKFHTYGLRIEES</sequence>
<comment type="function">
    <text evidence="1">Involved in the degradation of L-fucose and D-arabinose. Catalyzes the reversible cleavage of L-fuculose 1-phosphate (Fuc1P) to yield dihydroxyacetone phosphate (DHAP) and L-lactaldehyde.</text>
</comment>
<comment type="catalytic activity">
    <reaction evidence="1">
        <text>L-fuculose 1-phosphate = (S)-lactaldehyde + dihydroxyacetone phosphate</text>
        <dbReference type="Rhea" id="RHEA:12933"/>
        <dbReference type="ChEBI" id="CHEBI:18041"/>
        <dbReference type="ChEBI" id="CHEBI:57642"/>
        <dbReference type="ChEBI" id="CHEBI:57846"/>
        <dbReference type="EC" id="4.1.2.17"/>
    </reaction>
</comment>
<comment type="cofactor">
    <cofactor evidence="1">
        <name>Zn(2+)</name>
        <dbReference type="ChEBI" id="CHEBI:29105"/>
    </cofactor>
    <text evidence="1">Binds 1 zinc ion per subunit.</text>
</comment>
<comment type="pathway">
    <text evidence="1">Carbohydrate degradation; L-fucose degradation; L-lactaldehyde and glycerone phosphate from L-fucose: step 3/3.</text>
</comment>
<comment type="subunit">
    <text evidence="1">Homotetramer.</text>
</comment>
<comment type="similarity">
    <text evidence="1">Belongs to the aldolase class II family. AraD/FucA subfamily.</text>
</comment>
<evidence type="ECO:0000255" key="1">
    <source>
        <dbReference type="HAMAP-Rule" id="MF_00987"/>
    </source>
</evidence>
<organism>
    <name type="scientific">Haemophilus influenzae (strain ATCC 51907 / DSM 11121 / KW20 / Rd)</name>
    <dbReference type="NCBI Taxonomy" id="71421"/>
    <lineage>
        <taxon>Bacteria</taxon>
        <taxon>Pseudomonadati</taxon>
        <taxon>Pseudomonadota</taxon>
        <taxon>Gammaproteobacteria</taxon>
        <taxon>Pasteurellales</taxon>
        <taxon>Pasteurellaceae</taxon>
        <taxon>Haemophilus</taxon>
    </lineage>
</organism>